<accession>B7V5H1</accession>
<keyword id="KW-0131">Cell cycle</keyword>
<keyword id="KW-0132">Cell division</keyword>
<keyword id="KW-0159">Chromosome partition</keyword>
<keyword id="KW-0963">Cytoplasm</keyword>
<keyword id="KW-0229">DNA integration</keyword>
<keyword id="KW-0233">DNA recombination</keyword>
<keyword id="KW-0238">DNA-binding</keyword>
<proteinExistence type="inferred from homology"/>
<feature type="chain" id="PRO_1000187607" description="Tyrosine recombinase XerC">
    <location>
        <begin position="1"/>
        <end position="303"/>
    </location>
</feature>
<feature type="domain" description="Core-binding (CB)" evidence="3">
    <location>
        <begin position="1"/>
        <end position="85"/>
    </location>
</feature>
<feature type="domain" description="Tyr recombinase" evidence="2">
    <location>
        <begin position="106"/>
        <end position="285"/>
    </location>
</feature>
<feature type="active site" evidence="1">
    <location>
        <position position="146"/>
    </location>
</feature>
<feature type="active site" evidence="1">
    <location>
        <position position="170"/>
    </location>
</feature>
<feature type="active site" evidence="1">
    <location>
        <position position="237"/>
    </location>
</feature>
<feature type="active site" evidence="1">
    <location>
        <position position="240"/>
    </location>
</feature>
<feature type="active site" evidence="1">
    <location>
        <position position="263"/>
    </location>
</feature>
<feature type="active site" description="O-(3'-phospho-DNA)-tyrosine intermediate" evidence="1">
    <location>
        <position position="272"/>
    </location>
</feature>
<name>XERC_PSEA8</name>
<reference key="1">
    <citation type="journal article" date="2009" name="Genome Res.">
        <title>Newly introduced genomic prophage islands are critical determinants of in vivo competitiveness in the Liverpool epidemic strain of Pseudomonas aeruginosa.</title>
        <authorList>
            <person name="Winstanley C."/>
            <person name="Langille M.G.I."/>
            <person name="Fothergill J.L."/>
            <person name="Kukavica-Ibrulj I."/>
            <person name="Paradis-Bleau C."/>
            <person name="Sanschagrin F."/>
            <person name="Thomson N.R."/>
            <person name="Winsor G.L."/>
            <person name="Quail M.A."/>
            <person name="Lennard N."/>
            <person name="Bignell A."/>
            <person name="Clarke L."/>
            <person name="Seeger K."/>
            <person name="Saunders D."/>
            <person name="Harris D."/>
            <person name="Parkhill J."/>
            <person name="Hancock R.E.W."/>
            <person name="Brinkman F.S.L."/>
            <person name="Levesque R.C."/>
        </authorList>
    </citation>
    <scope>NUCLEOTIDE SEQUENCE [LARGE SCALE GENOMIC DNA]</scope>
    <source>
        <strain>LESB58</strain>
    </source>
</reference>
<dbReference type="EMBL" id="FM209186">
    <property type="protein sequence ID" value="CAW30429.1"/>
    <property type="molecule type" value="Genomic_DNA"/>
</dbReference>
<dbReference type="RefSeq" id="WP_003096434.1">
    <property type="nucleotide sequence ID" value="NC_011770.1"/>
</dbReference>
<dbReference type="SMR" id="B7V5H1"/>
<dbReference type="KEGG" id="pag:PLES_56751"/>
<dbReference type="HOGENOM" id="CLU_027562_9_0_6"/>
<dbReference type="GO" id="GO:0005737">
    <property type="term" value="C:cytoplasm"/>
    <property type="evidence" value="ECO:0007669"/>
    <property type="project" value="UniProtKB-SubCell"/>
</dbReference>
<dbReference type="GO" id="GO:0003677">
    <property type="term" value="F:DNA binding"/>
    <property type="evidence" value="ECO:0007669"/>
    <property type="project" value="UniProtKB-KW"/>
</dbReference>
<dbReference type="GO" id="GO:0009037">
    <property type="term" value="F:tyrosine-based site-specific recombinase activity"/>
    <property type="evidence" value="ECO:0007669"/>
    <property type="project" value="UniProtKB-UniRule"/>
</dbReference>
<dbReference type="GO" id="GO:0051301">
    <property type="term" value="P:cell division"/>
    <property type="evidence" value="ECO:0007669"/>
    <property type="project" value="UniProtKB-KW"/>
</dbReference>
<dbReference type="GO" id="GO:0007059">
    <property type="term" value="P:chromosome segregation"/>
    <property type="evidence" value="ECO:0007669"/>
    <property type="project" value="UniProtKB-UniRule"/>
</dbReference>
<dbReference type="GO" id="GO:0006313">
    <property type="term" value="P:DNA transposition"/>
    <property type="evidence" value="ECO:0007669"/>
    <property type="project" value="UniProtKB-UniRule"/>
</dbReference>
<dbReference type="CDD" id="cd00798">
    <property type="entry name" value="INT_XerDC_C"/>
    <property type="match status" value="1"/>
</dbReference>
<dbReference type="Gene3D" id="1.10.150.130">
    <property type="match status" value="1"/>
</dbReference>
<dbReference type="Gene3D" id="1.10.443.10">
    <property type="entry name" value="Intergrase catalytic core"/>
    <property type="match status" value="1"/>
</dbReference>
<dbReference type="HAMAP" id="MF_01808">
    <property type="entry name" value="Recomb_XerC_XerD"/>
    <property type="match status" value="1"/>
</dbReference>
<dbReference type="InterPro" id="IPR044068">
    <property type="entry name" value="CB"/>
</dbReference>
<dbReference type="InterPro" id="IPR011010">
    <property type="entry name" value="DNA_brk_join_enz"/>
</dbReference>
<dbReference type="InterPro" id="IPR013762">
    <property type="entry name" value="Integrase-like_cat_sf"/>
</dbReference>
<dbReference type="InterPro" id="IPR002104">
    <property type="entry name" value="Integrase_catalytic"/>
</dbReference>
<dbReference type="InterPro" id="IPR010998">
    <property type="entry name" value="Integrase_recombinase_N"/>
</dbReference>
<dbReference type="InterPro" id="IPR004107">
    <property type="entry name" value="Integrase_SAM-like_N"/>
</dbReference>
<dbReference type="InterPro" id="IPR011931">
    <property type="entry name" value="Recomb_XerC"/>
</dbReference>
<dbReference type="InterPro" id="IPR023009">
    <property type="entry name" value="Tyrosine_recombinase_XerC/XerD"/>
</dbReference>
<dbReference type="InterPro" id="IPR050090">
    <property type="entry name" value="Tyrosine_recombinase_XerCD"/>
</dbReference>
<dbReference type="NCBIfam" id="NF001399">
    <property type="entry name" value="PRK00283.1"/>
    <property type="match status" value="1"/>
</dbReference>
<dbReference type="NCBIfam" id="TIGR02224">
    <property type="entry name" value="recomb_XerC"/>
    <property type="match status" value="1"/>
</dbReference>
<dbReference type="PANTHER" id="PTHR30349">
    <property type="entry name" value="PHAGE INTEGRASE-RELATED"/>
    <property type="match status" value="1"/>
</dbReference>
<dbReference type="PANTHER" id="PTHR30349:SF81">
    <property type="entry name" value="TYROSINE RECOMBINASE XERC"/>
    <property type="match status" value="1"/>
</dbReference>
<dbReference type="Pfam" id="PF02899">
    <property type="entry name" value="Phage_int_SAM_1"/>
    <property type="match status" value="1"/>
</dbReference>
<dbReference type="Pfam" id="PF00589">
    <property type="entry name" value="Phage_integrase"/>
    <property type="match status" value="1"/>
</dbReference>
<dbReference type="SUPFAM" id="SSF56349">
    <property type="entry name" value="DNA breaking-rejoining enzymes"/>
    <property type="match status" value="1"/>
</dbReference>
<dbReference type="SUPFAM" id="SSF47823">
    <property type="entry name" value="lambda integrase-like, N-terminal domain"/>
    <property type="match status" value="1"/>
</dbReference>
<dbReference type="PROSITE" id="PS51900">
    <property type="entry name" value="CB"/>
    <property type="match status" value="1"/>
</dbReference>
<dbReference type="PROSITE" id="PS51898">
    <property type="entry name" value="TYR_RECOMBINASE"/>
    <property type="match status" value="1"/>
</dbReference>
<sequence length="303" mass="33870">MRADLDAFLEHLRSERQVSAHTLDGYRRDLLKILALAEKAGLSDWNALDTRSLRTFVARLHQQGQSSRSLARLLSATRGLYQYLLREGRCRHDPANGLSAPKSPRKLPRTLDADRALQLLDGAVEDDFIARRDQALLELFYSSGLRLSELVGLDLEWLDLKEGLVRVRGKGNKVRELPVGKAARQALEAWLPLRAQAAPEDGAVFIGRGGKRLTPRAIQLRVRQAGVRELGQHLHPHMLRHSFASHLLESSGDLRAVQELLGHADIATTQIYTHLDFQHLASVYDRAHPRAKRKGNADGGNDP</sequence>
<gene>
    <name evidence="1" type="primary">xerC</name>
    <name type="ordered locus">PLES_56751</name>
</gene>
<evidence type="ECO:0000255" key="1">
    <source>
        <dbReference type="HAMAP-Rule" id="MF_01808"/>
    </source>
</evidence>
<evidence type="ECO:0000255" key="2">
    <source>
        <dbReference type="PROSITE-ProRule" id="PRU01246"/>
    </source>
</evidence>
<evidence type="ECO:0000255" key="3">
    <source>
        <dbReference type="PROSITE-ProRule" id="PRU01248"/>
    </source>
</evidence>
<comment type="function">
    <text evidence="1">Site-specific tyrosine recombinase, which acts by catalyzing the cutting and rejoining of the recombining DNA molecules. The XerC-XerD complex is essential to convert dimers of the bacterial chromosome into monomers to permit their segregation at cell division. It also contributes to the segregational stability of plasmids.</text>
</comment>
<comment type="subunit">
    <text evidence="1">Forms a cyclic heterotetrameric complex composed of two molecules of XerC and two molecules of XerD.</text>
</comment>
<comment type="subcellular location">
    <subcellularLocation>
        <location evidence="1">Cytoplasm</location>
    </subcellularLocation>
</comment>
<comment type="similarity">
    <text evidence="1">Belongs to the 'phage' integrase family. XerC subfamily.</text>
</comment>
<protein>
    <recommendedName>
        <fullName evidence="1">Tyrosine recombinase XerC</fullName>
    </recommendedName>
</protein>
<organism>
    <name type="scientific">Pseudomonas aeruginosa (strain LESB58)</name>
    <dbReference type="NCBI Taxonomy" id="557722"/>
    <lineage>
        <taxon>Bacteria</taxon>
        <taxon>Pseudomonadati</taxon>
        <taxon>Pseudomonadota</taxon>
        <taxon>Gammaproteobacteria</taxon>
        <taxon>Pseudomonadales</taxon>
        <taxon>Pseudomonadaceae</taxon>
        <taxon>Pseudomonas</taxon>
    </lineage>
</organism>